<keyword id="KW-1185">Reference proteome</keyword>
<keyword id="KW-0686">Riboflavin biosynthesis</keyword>
<keyword id="KW-0808">Transferase</keyword>
<evidence type="ECO:0000255" key="1">
    <source>
        <dbReference type="HAMAP-Rule" id="MF_00178"/>
    </source>
</evidence>
<protein>
    <recommendedName>
        <fullName evidence="1">6,7-dimethyl-8-ribityllumazine synthase</fullName>
        <shortName evidence="1">DMRL synthase</shortName>
        <shortName evidence="1">LS</shortName>
        <shortName evidence="1">Lumazine synthase</shortName>
        <ecNumber evidence="1">2.5.1.78</ecNumber>
    </recommendedName>
</protein>
<dbReference type="EC" id="2.5.1.78" evidence="1"/>
<dbReference type="EMBL" id="CP000435">
    <property type="protein sequence ID" value="ABI46309.1"/>
    <property type="molecule type" value="Genomic_DNA"/>
</dbReference>
<dbReference type="RefSeq" id="WP_011618069.1">
    <property type="nucleotide sequence ID" value="NC_008319.1"/>
</dbReference>
<dbReference type="SMR" id="Q0IE03"/>
<dbReference type="STRING" id="64471.sync_0081"/>
<dbReference type="KEGG" id="syg:sync_0081"/>
<dbReference type="eggNOG" id="COG0054">
    <property type="taxonomic scope" value="Bacteria"/>
</dbReference>
<dbReference type="HOGENOM" id="CLU_089358_1_0_3"/>
<dbReference type="OrthoDB" id="9809709at2"/>
<dbReference type="UniPathway" id="UPA00275">
    <property type="reaction ID" value="UER00404"/>
</dbReference>
<dbReference type="Proteomes" id="UP000001961">
    <property type="component" value="Chromosome"/>
</dbReference>
<dbReference type="GO" id="GO:0005829">
    <property type="term" value="C:cytosol"/>
    <property type="evidence" value="ECO:0007669"/>
    <property type="project" value="TreeGrafter"/>
</dbReference>
<dbReference type="GO" id="GO:0009349">
    <property type="term" value="C:riboflavin synthase complex"/>
    <property type="evidence" value="ECO:0007669"/>
    <property type="project" value="InterPro"/>
</dbReference>
<dbReference type="GO" id="GO:0000906">
    <property type="term" value="F:6,7-dimethyl-8-ribityllumazine synthase activity"/>
    <property type="evidence" value="ECO:0007669"/>
    <property type="project" value="UniProtKB-UniRule"/>
</dbReference>
<dbReference type="GO" id="GO:0009231">
    <property type="term" value="P:riboflavin biosynthetic process"/>
    <property type="evidence" value="ECO:0007669"/>
    <property type="project" value="UniProtKB-UniRule"/>
</dbReference>
<dbReference type="CDD" id="cd09209">
    <property type="entry name" value="Lumazine_synthase-I"/>
    <property type="match status" value="1"/>
</dbReference>
<dbReference type="Gene3D" id="3.40.50.960">
    <property type="entry name" value="Lumazine/riboflavin synthase"/>
    <property type="match status" value="1"/>
</dbReference>
<dbReference type="HAMAP" id="MF_00178">
    <property type="entry name" value="Lumazine_synth"/>
    <property type="match status" value="1"/>
</dbReference>
<dbReference type="InterPro" id="IPR034964">
    <property type="entry name" value="LS"/>
</dbReference>
<dbReference type="InterPro" id="IPR002180">
    <property type="entry name" value="LS/RS"/>
</dbReference>
<dbReference type="InterPro" id="IPR036467">
    <property type="entry name" value="LS/RS_sf"/>
</dbReference>
<dbReference type="NCBIfam" id="TIGR00114">
    <property type="entry name" value="lumazine-synth"/>
    <property type="match status" value="1"/>
</dbReference>
<dbReference type="PANTHER" id="PTHR21058:SF0">
    <property type="entry name" value="6,7-DIMETHYL-8-RIBITYLLUMAZINE SYNTHASE"/>
    <property type="match status" value="1"/>
</dbReference>
<dbReference type="PANTHER" id="PTHR21058">
    <property type="entry name" value="6,7-DIMETHYL-8-RIBITYLLUMAZINE SYNTHASE DMRL SYNTHASE LUMAZINE SYNTHASE"/>
    <property type="match status" value="1"/>
</dbReference>
<dbReference type="Pfam" id="PF00885">
    <property type="entry name" value="DMRL_synthase"/>
    <property type="match status" value="1"/>
</dbReference>
<dbReference type="SUPFAM" id="SSF52121">
    <property type="entry name" value="Lumazine synthase"/>
    <property type="match status" value="1"/>
</dbReference>
<proteinExistence type="inferred from homology"/>
<accession>Q0IE03</accession>
<comment type="function">
    <text evidence="1">Catalyzes the formation of 6,7-dimethyl-8-ribityllumazine by condensation of 5-amino-6-(D-ribitylamino)uracil with 3,4-dihydroxy-2-butanone 4-phosphate. This is the penultimate step in the biosynthesis of riboflavin.</text>
</comment>
<comment type="catalytic activity">
    <reaction evidence="1">
        <text>(2S)-2-hydroxy-3-oxobutyl phosphate + 5-amino-6-(D-ribitylamino)uracil = 6,7-dimethyl-8-(1-D-ribityl)lumazine + phosphate + 2 H2O + H(+)</text>
        <dbReference type="Rhea" id="RHEA:26152"/>
        <dbReference type="ChEBI" id="CHEBI:15377"/>
        <dbReference type="ChEBI" id="CHEBI:15378"/>
        <dbReference type="ChEBI" id="CHEBI:15934"/>
        <dbReference type="ChEBI" id="CHEBI:43474"/>
        <dbReference type="ChEBI" id="CHEBI:58201"/>
        <dbReference type="ChEBI" id="CHEBI:58830"/>
        <dbReference type="EC" id="2.5.1.78"/>
    </reaction>
</comment>
<comment type="pathway">
    <text evidence="1">Cofactor biosynthesis; riboflavin biosynthesis; riboflavin from 2-hydroxy-3-oxobutyl phosphate and 5-amino-6-(D-ribitylamino)uracil: step 1/2.</text>
</comment>
<comment type="similarity">
    <text evidence="1">Belongs to the DMRL synthase family.</text>
</comment>
<reference key="1">
    <citation type="journal article" date="2006" name="Proc. Natl. Acad. Sci. U.S.A.">
        <title>Genome sequence of Synechococcus CC9311: insights into adaptation to a coastal environment.</title>
        <authorList>
            <person name="Palenik B."/>
            <person name="Ren Q."/>
            <person name="Dupont C.L."/>
            <person name="Myers G.S."/>
            <person name="Heidelberg J.F."/>
            <person name="Badger J.H."/>
            <person name="Madupu R."/>
            <person name="Nelson W.C."/>
            <person name="Brinkac L.M."/>
            <person name="Dodson R.J."/>
            <person name="Durkin A.S."/>
            <person name="Daugherty S.C."/>
            <person name="Sullivan S.A."/>
            <person name="Khouri H."/>
            <person name="Mohamoud Y."/>
            <person name="Halpin R."/>
            <person name="Paulsen I.T."/>
        </authorList>
    </citation>
    <scope>NUCLEOTIDE SEQUENCE [LARGE SCALE GENOMIC DNA]</scope>
    <source>
        <strain>CC9311</strain>
    </source>
</reference>
<sequence>MATFEGRFTDLGQVRIAVVVARFNDLVTAKLLSGCLDCLSRHGVDTTAESSQLDVAWVPGSFELPLVSQNLARSGLYQVVITLGAVIRGDTPHFDVVVAEASKGIAAVARDTGVPVIFGVLTTDTMQQALERAGIKSNLGWSYGLEALEMASLMKVLPGH</sequence>
<gene>
    <name evidence="1" type="primary">ribH</name>
    <name type="ordered locus">sync_0081</name>
</gene>
<name>RISB_SYNS3</name>
<organism>
    <name type="scientific">Synechococcus sp. (strain CC9311)</name>
    <dbReference type="NCBI Taxonomy" id="64471"/>
    <lineage>
        <taxon>Bacteria</taxon>
        <taxon>Bacillati</taxon>
        <taxon>Cyanobacteriota</taxon>
        <taxon>Cyanophyceae</taxon>
        <taxon>Synechococcales</taxon>
        <taxon>Synechococcaceae</taxon>
        <taxon>Synechococcus</taxon>
    </lineage>
</organism>
<feature type="chain" id="PRO_1000040535" description="6,7-dimethyl-8-ribityllumazine synthase">
    <location>
        <begin position="1"/>
        <end position="160"/>
    </location>
</feature>
<feature type="active site" description="Proton donor" evidence="1">
    <location>
        <position position="93"/>
    </location>
</feature>
<feature type="binding site" evidence="1">
    <location>
        <position position="23"/>
    </location>
    <ligand>
        <name>5-amino-6-(D-ribitylamino)uracil</name>
        <dbReference type="ChEBI" id="CHEBI:15934"/>
    </ligand>
</feature>
<feature type="binding site" evidence="1">
    <location>
        <begin position="61"/>
        <end position="63"/>
    </location>
    <ligand>
        <name>5-amino-6-(D-ribitylamino)uracil</name>
        <dbReference type="ChEBI" id="CHEBI:15934"/>
    </ligand>
</feature>
<feature type="binding site" evidence="1">
    <location>
        <begin position="85"/>
        <end position="87"/>
    </location>
    <ligand>
        <name>5-amino-6-(D-ribitylamino)uracil</name>
        <dbReference type="ChEBI" id="CHEBI:15934"/>
    </ligand>
</feature>
<feature type="binding site" evidence="1">
    <location>
        <begin position="90"/>
        <end position="91"/>
    </location>
    <ligand>
        <name>(2S)-2-hydroxy-3-oxobutyl phosphate</name>
        <dbReference type="ChEBI" id="CHEBI:58830"/>
    </ligand>
</feature>
<feature type="binding site" evidence="1">
    <location>
        <position position="118"/>
    </location>
    <ligand>
        <name>5-amino-6-(D-ribitylamino)uracil</name>
        <dbReference type="ChEBI" id="CHEBI:15934"/>
    </ligand>
</feature>
<feature type="binding site" evidence="1">
    <location>
        <position position="132"/>
    </location>
    <ligand>
        <name>(2S)-2-hydroxy-3-oxobutyl phosphate</name>
        <dbReference type="ChEBI" id="CHEBI:58830"/>
    </ligand>
</feature>